<sequence>MSQDYYQILGVSKTASQADLKKAYLKLAKQYHPDTTDAKDAEKKFKEINSAYDVLKDEQKRAAYDRFGHDTFQYQQSRGGGGNHGGFHPDINDIFGDFFSDFMGGGRRKPTSSKARGSDLKYDLTINLEEAFHGIEKNISFSSEVKCDTCHGTGSEKGETVTTCDACGGVGATRIQQGFFTIEQACHKCQGNGQIIKNPCKKCHGMGRYHKQRNLSVNIPAGVENATRIRHPGEGEAGIRGGNSGDLYVDIAIKPHDIYKVDGANLHCKLPISFVNAALGGEIEVPIIEGGKVNLTIPAGTQNGDQLRLRSKGMSKMRSTIRGDMLTHIHVEVPKNLSKRQRELLEEFKKESINEKENDGSFFNKMKSLWS</sequence>
<comment type="function">
    <text evidence="1">Participates actively in the response to hyperosmotic and heat shock by preventing the aggregation of stress-denatured proteins and by disaggregating proteins, also in an autonomous, DnaK-independent fashion. Unfolded proteins bind initially to DnaJ; upon interaction with the DnaJ-bound protein, DnaK hydrolyzes its bound ATP, resulting in the formation of a stable complex. GrpE releases ADP from DnaK; ATP binding to DnaK triggers the release of the substrate protein, thus completing the reaction cycle. Several rounds of ATP-dependent interactions between DnaJ, DnaK and GrpE are required for fully efficient folding. Also involved, together with DnaK and GrpE, in the DNA replication of plasmids through activation of initiation proteins.</text>
</comment>
<comment type="cofactor">
    <cofactor evidence="1">
        <name>Zn(2+)</name>
        <dbReference type="ChEBI" id="CHEBI:29105"/>
    </cofactor>
    <text evidence="1">Binds 2 Zn(2+) ions per monomer.</text>
</comment>
<comment type="subunit">
    <text evidence="1">Homodimer.</text>
</comment>
<comment type="subcellular location">
    <subcellularLocation>
        <location evidence="1">Cytoplasm</location>
    </subcellularLocation>
</comment>
<comment type="domain">
    <text evidence="1">The J domain is necessary and sufficient to stimulate DnaK ATPase activity. Zinc center 1 plays an important role in the autonomous, DnaK-independent chaperone activity of DnaJ. Zinc center 2 is essential for interaction with DnaK and for DnaJ activity.</text>
</comment>
<comment type="similarity">
    <text evidence="1">Belongs to the DnaJ family.</text>
</comment>
<dbReference type="EMBL" id="CP000053">
    <property type="protein sequence ID" value="AAY61936.1"/>
    <property type="molecule type" value="Genomic_DNA"/>
</dbReference>
<dbReference type="SMR" id="Q4UJK6"/>
<dbReference type="STRING" id="315456.RF_1085"/>
<dbReference type="KEGG" id="rfe:RF_1085"/>
<dbReference type="eggNOG" id="COG0484">
    <property type="taxonomic scope" value="Bacteria"/>
</dbReference>
<dbReference type="HOGENOM" id="CLU_017633_0_7_5"/>
<dbReference type="OrthoDB" id="9779889at2"/>
<dbReference type="Proteomes" id="UP000008548">
    <property type="component" value="Chromosome"/>
</dbReference>
<dbReference type="GO" id="GO:0005737">
    <property type="term" value="C:cytoplasm"/>
    <property type="evidence" value="ECO:0007669"/>
    <property type="project" value="UniProtKB-SubCell"/>
</dbReference>
<dbReference type="GO" id="GO:0005524">
    <property type="term" value="F:ATP binding"/>
    <property type="evidence" value="ECO:0007669"/>
    <property type="project" value="InterPro"/>
</dbReference>
<dbReference type="GO" id="GO:0031072">
    <property type="term" value="F:heat shock protein binding"/>
    <property type="evidence" value="ECO:0007669"/>
    <property type="project" value="InterPro"/>
</dbReference>
<dbReference type="GO" id="GO:0051082">
    <property type="term" value="F:unfolded protein binding"/>
    <property type="evidence" value="ECO:0007669"/>
    <property type="project" value="UniProtKB-UniRule"/>
</dbReference>
<dbReference type="GO" id="GO:0008270">
    <property type="term" value="F:zinc ion binding"/>
    <property type="evidence" value="ECO:0007669"/>
    <property type="project" value="UniProtKB-UniRule"/>
</dbReference>
<dbReference type="GO" id="GO:0051085">
    <property type="term" value="P:chaperone cofactor-dependent protein refolding"/>
    <property type="evidence" value="ECO:0007669"/>
    <property type="project" value="TreeGrafter"/>
</dbReference>
<dbReference type="GO" id="GO:0006260">
    <property type="term" value="P:DNA replication"/>
    <property type="evidence" value="ECO:0007669"/>
    <property type="project" value="UniProtKB-KW"/>
</dbReference>
<dbReference type="GO" id="GO:0042026">
    <property type="term" value="P:protein refolding"/>
    <property type="evidence" value="ECO:0007669"/>
    <property type="project" value="TreeGrafter"/>
</dbReference>
<dbReference type="GO" id="GO:0009408">
    <property type="term" value="P:response to heat"/>
    <property type="evidence" value="ECO:0007669"/>
    <property type="project" value="InterPro"/>
</dbReference>
<dbReference type="CDD" id="cd06257">
    <property type="entry name" value="DnaJ"/>
    <property type="match status" value="1"/>
</dbReference>
<dbReference type="CDD" id="cd10747">
    <property type="entry name" value="DnaJ_C"/>
    <property type="match status" value="1"/>
</dbReference>
<dbReference type="CDD" id="cd10719">
    <property type="entry name" value="DnaJ_zf"/>
    <property type="match status" value="1"/>
</dbReference>
<dbReference type="FunFam" id="1.10.287.110:FF:000153">
    <property type="entry name" value="Chaperone protein DnaJ"/>
    <property type="match status" value="1"/>
</dbReference>
<dbReference type="FunFam" id="2.10.230.10:FF:000002">
    <property type="entry name" value="Molecular chaperone DnaJ"/>
    <property type="match status" value="1"/>
</dbReference>
<dbReference type="FunFam" id="2.60.260.20:FF:000004">
    <property type="entry name" value="Molecular chaperone DnaJ"/>
    <property type="match status" value="1"/>
</dbReference>
<dbReference type="Gene3D" id="1.10.287.110">
    <property type="entry name" value="DnaJ domain"/>
    <property type="match status" value="1"/>
</dbReference>
<dbReference type="Gene3D" id="2.10.230.10">
    <property type="entry name" value="Heat shock protein DnaJ, cysteine-rich domain"/>
    <property type="match status" value="1"/>
</dbReference>
<dbReference type="Gene3D" id="2.60.260.20">
    <property type="entry name" value="Urease metallochaperone UreE, N-terminal domain"/>
    <property type="match status" value="2"/>
</dbReference>
<dbReference type="HAMAP" id="MF_01152">
    <property type="entry name" value="DnaJ"/>
    <property type="match status" value="1"/>
</dbReference>
<dbReference type="InterPro" id="IPR012724">
    <property type="entry name" value="DnaJ"/>
</dbReference>
<dbReference type="InterPro" id="IPR002939">
    <property type="entry name" value="DnaJ_C"/>
</dbReference>
<dbReference type="InterPro" id="IPR001623">
    <property type="entry name" value="DnaJ_domain"/>
</dbReference>
<dbReference type="InterPro" id="IPR018253">
    <property type="entry name" value="DnaJ_domain_CS"/>
</dbReference>
<dbReference type="InterPro" id="IPR008971">
    <property type="entry name" value="HSP40/DnaJ_pept-bd"/>
</dbReference>
<dbReference type="InterPro" id="IPR001305">
    <property type="entry name" value="HSP_DnaJ_Cys-rich_dom"/>
</dbReference>
<dbReference type="InterPro" id="IPR036410">
    <property type="entry name" value="HSP_DnaJ_Cys-rich_dom_sf"/>
</dbReference>
<dbReference type="InterPro" id="IPR036869">
    <property type="entry name" value="J_dom_sf"/>
</dbReference>
<dbReference type="NCBIfam" id="TIGR02349">
    <property type="entry name" value="DnaJ_bact"/>
    <property type="match status" value="1"/>
</dbReference>
<dbReference type="NCBIfam" id="NF008035">
    <property type="entry name" value="PRK10767.1"/>
    <property type="match status" value="1"/>
</dbReference>
<dbReference type="NCBIfam" id="NF010893">
    <property type="entry name" value="PRK14300.1"/>
    <property type="match status" value="1"/>
</dbReference>
<dbReference type="PANTHER" id="PTHR43096">
    <property type="entry name" value="DNAJ HOMOLOG 1, MITOCHONDRIAL-RELATED"/>
    <property type="match status" value="1"/>
</dbReference>
<dbReference type="PANTHER" id="PTHR43096:SF52">
    <property type="entry name" value="DNAJ HOMOLOG 1, MITOCHONDRIAL-RELATED"/>
    <property type="match status" value="1"/>
</dbReference>
<dbReference type="Pfam" id="PF00226">
    <property type="entry name" value="DnaJ"/>
    <property type="match status" value="1"/>
</dbReference>
<dbReference type="Pfam" id="PF01556">
    <property type="entry name" value="DnaJ_C"/>
    <property type="match status" value="1"/>
</dbReference>
<dbReference type="Pfam" id="PF00684">
    <property type="entry name" value="DnaJ_CXXCXGXG"/>
    <property type="match status" value="1"/>
</dbReference>
<dbReference type="PRINTS" id="PR00625">
    <property type="entry name" value="JDOMAIN"/>
</dbReference>
<dbReference type="SMART" id="SM00271">
    <property type="entry name" value="DnaJ"/>
    <property type="match status" value="1"/>
</dbReference>
<dbReference type="SUPFAM" id="SSF46565">
    <property type="entry name" value="Chaperone J-domain"/>
    <property type="match status" value="1"/>
</dbReference>
<dbReference type="SUPFAM" id="SSF57938">
    <property type="entry name" value="DnaJ/Hsp40 cysteine-rich domain"/>
    <property type="match status" value="1"/>
</dbReference>
<dbReference type="SUPFAM" id="SSF49493">
    <property type="entry name" value="HSP40/DnaJ peptide-binding domain"/>
    <property type="match status" value="2"/>
</dbReference>
<dbReference type="PROSITE" id="PS00636">
    <property type="entry name" value="DNAJ_1"/>
    <property type="match status" value="1"/>
</dbReference>
<dbReference type="PROSITE" id="PS50076">
    <property type="entry name" value="DNAJ_2"/>
    <property type="match status" value="1"/>
</dbReference>
<dbReference type="PROSITE" id="PS51188">
    <property type="entry name" value="ZF_CR"/>
    <property type="match status" value="1"/>
</dbReference>
<gene>
    <name evidence="1" type="primary">dnaJ</name>
    <name type="ordered locus">RF_1085</name>
</gene>
<keyword id="KW-0143">Chaperone</keyword>
<keyword id="KW-0963">Cytoplasm</keyword>
<keyword id="KW-0235">DNA replication</keyword>
<keyword id="KW-0479">Metal-binding</keyword>
<keyword id="KW-0677">Repeat</keyword>
<keyword id="KW-0346">Stress response</keyword>
<keyword id="KW-0862">Zinc</keyword>
<keyword id="KW-0863">Zinc-finger</keyword>
<organism>
    <name type="scientific">Rickettsia felis (strain ATCC VR-1525 / URRWXCal2)</name>
    <name type="common">Rickettsia azadi</name>
    <dbReference type="NCBI Taxonomy" id="315456"/>
    <lineage>
        <taxon>Bacteria</taxon>
        <taxon>Pseudomonadati</taxon>
        <taxon>Pseudomonadota</taxon>
        <taxon>Alphaproteobacteria</taxon>
        <taxon>Rickettsiales</taxon>
        <taxon>Rickettsiaceae</taxon>
        <taxon>Rickettsieae</taxon>
        <taxon>Rickettsia</taxon>
        <taxon>spotted fever group</taxon>
    </lineage>
</organism>
<proteinExistence type="inferred from homology"/>
<evidence type="ECO:0000255" key="1">
    <source>
        <dbReference type="HAMAP-Rule" id="MF_01152"/>
    </source>
</evidence>
<reference key="1">
    <citation type="journal article" date="2005" name="PLoS Biol.">
        <title>The genome sequence of Rickettsia felis identifies the first putative conjugative plasmid in an obligate intracellular parasite.</title>
        <authorList>
            <person name="Ogata H."/>
            <person name="Renesto P."/>
            <person name="Audic S."/>
            <person name="Robert C."/>
            <person name="Blanc G."/>
            <person name="Fournier P.-E."/>
            <person name="Parinello H."/>
            <person name="Claverie J.-M."/>
            <person name="Raoult D."/>
        </authorList>
    </citation>
    <scope>NUCLEOTIDE SEQUENCE [LARGE SCALE GENOMIC DNA]</scope>
    <source>
        <strain>ATCC VR-1525 / URRWXCal2</strain>
    </source>
</reference>
<accession>Q4UJK6</accession>
<feature type="chain" id="PRO_0000070872" description="Chaperone protein DnaJ">
    <location>
        <begin position="1"/>
        <end position="371"/>
    </location>
</feature>
<feature type="domain" description="J" evidence="1">
    <location>
        <begin position="4"/>
        <end position="68"/>
    </location>
</feature>
<feature type="repeat" description="CXXCXGXG motif">
    <location>
        <begin position="147"/>
        <end position="154"/>
    </location>
</feature>
<feature type="repeat" description="CXXCXGXG motif">
    <location>
        <begin position="164"/>
        <end position="171"/>
    </location>
</feature>
<feature type="repeat" description="CXXCXGXG motif">
    <location>
        <begin position="186"/>
        <end position="193"/>
    </location>
</feature>
<feature type="repeat" description="CXXCXGXG motif">
    <location>
        <begin position="200"/>
        <end position="207"/>
    </location>
</feature>
<feature type="zinc finger region" description="CR-type" evidence="1">
    <location>
        <begin position="134"/>
        <end position="212"/>
    </location>
</feature>
<feature type="binding site" evidence="1">
    <location>
        <position position="147"/>
    </location>
    <ligand>
        <name>Zn(2+)</name>
        <dbReference type="ChEBI" id="CHEBI:29105"/>
        <label>1</label>
    </ligand>
</feature>
<feature type="binding site" evidence="1">
    <location>
        <position position="150"/>
    </location>
    <ligand>
        <name>Zn(2+)</name>
        <dbReference type="ChEBI" id="CHEBI:29105"/>
        <label>1</label>
    </ligand>
</feature>
<feature type="binding site" evidence="1">
    <location>
        <position position="164"/>
    </location>
    <ligand>
        <name>Zn(2+)</name>
        <dbReference type="ChEBI" id="CHEBI:29105"/>
        <label>2</label>
    </ligand>
</feature>
<feature type="binding site" evidence="1">
    <location>
        <position position="167"/>
    </location>
    <ligand>
        <name>Zn(2+)</name>
        <dbReference type="ChEBI" id="CHEBI:29105"/>
        <label>2</label>
    </ligand>
</feature>
<feature type="binding site" evidence="1">
    <location>
        <position position="186"/>
    </location>
    <ligand>
        <name>Zn(2+)</name>
        <dbReference type="ChEBI" id="CHEBI:29105"/>
        <label>2</label>
    </ligand>
</feature>
<feature type="binding site" evidence="1">
    <location>
        <position position="189"/>
    </location>
    <ligand>
        <name>Zn(2+)</name>
        <dbReference type="ChEBI" id="CHEBI:29105"/>
        <label>2</label>
    </ligand>
</feature>
<feature type="binding site" evidence="1">
    <location>
        <position position="200"/>
    </location>
    <ligand>
        <name>Zn(2+)</name>
        <dbReference type="ChEBI" id="CHEBI:29105"/>
        <label>1</label>
    </ligand>
</feature>
<feature type="binding site" evidence="1">
    <location>
        <position position="203"/>
    </location>
    <ligand>
        <name>Zn(2+)</name>
        <dbReference type="ChEBI" id="CHEBI:29105"/>
        <label>1</label>
    </ligand>
</feature>
<protein>
    <recommendedName>
        <fullName evidence="1">Chaperone protein DnaJ</fullName>
    </recommendedName>
</protein>
<name>DNAJ_RICFE</name>